<gene>
    <name evidence="1" type="primary">folD</name>
    <name type="ordered locus">Tpet_1055</name>
</gene>
<evidence type="ECO:0000255" key="1">
    <source>
        <dbReference type="HAMAP-Rule" id="MF_01576"/>
    </source>
</evidence>
<comment type="function">
    <text evidence="1">Catalyzes the oxidation of 5,10-methylenetetrahydrofolate to 5,10-methenyltetrahydrofolate and then the hydrolysis of 5,10-methenyltetrahydrofolate to 10-formyltetrahydrofolate.</text>
</comment>
<comment type="catalytic activity">
    <reaction evidence="1">
        <text>(6R)-5,10-methylene-5,6,7,8-tetrahydrofolate + NADP(+) = (6R)-5,10-methenyltetrahydrofolate + NADPH</text>
        <dbReference type="Rhea" id="RHEA:22812"/>
        <dbReference type="ChEBI" id="CHEBI:15636"/>
        <dbReference type="ChEBI" id="CHEBI:57455"/>
        <dbReference type="ChEBI" id="CHEBI:57783"/>
        <dbReference type="ChEBI" id="CHEBI:58349"/>
        <dbReference type="EC" id="1.5.1.5"/>
    </reaction>
</comment>
<comment type="catalytic activity">
    <reaction evidence="1">
        <text>(6R)-5,10-methenyltetrahydrofolate + H2O = (6R)-10-formyltetrahydrofolate + H(+)</text>
        <dbReference type="Rhea" id="RHEA:23700"/>
        <dbReference type="ChEBI" id="CHEBI:15377"/>
        <dbReference type="ChEBI" id="CHEBI:15378"/>
        <dbReference type="ChEBI" id="CHEBI:57455"/>
        <dbReference type="ChEBI" id="CHEBI:195366"/>
        <dbReference type="EC" id="3.5.4.9"/>
    </reaction>
</comment>
<comment type="pathway">
    <text evidence="1">One-carbon metabolism; tetrahydrofolate interconversion.</text>
</comment>
<comment type="subunit">
    <text evidence="1">Homodimer.</text>
</comment>
<comment type="similarity">
    <text evidence="1">Belongs to the tetrahydrofolate dehydrogenase/cyclohydrolase family.</text>
</comment>
<sequence>MWIDCRTIARSIEERTKERVEKLGFTPKLVSVACTDDPSTLSYLKSQRKKAEKLGIAFEILNVSPEEIVSTLKKLGSDESVNGVFVARPFPPSFDEKEILSSVPVEKDVEGVNPANLGLLLYDEEIFPPCTAEAAVRILERETNLSGKRVTVVGRSVTVGKPLALMLLKKGRDATVTVCHSRTVNLEEITKNSDIVVVAVGRAHFLKKNMVKEGAIVIDVGINYVDGKLQGDVDPSVEEIARVTPVPGGVGQVTTALLFEHVVRAAERQRK</sequence>
<feature type="chain" id="PRO_0000318793" description="Bifunctional protein FolD">
    <location>
        <begin position="1"/>
        <end position="271"/>
    </location>
</feature>
<feature type="binding site" evidence="1">
    <location>
        <begin position="154"/>
        <end position="156"/>
    </location>
    <ligand>
        <name>NADP(+)</name>
        <dbReference type="ChEBI" id="CHEBI:58349"/>
    </ligand>
</feature>
<feature type="binding site" evidence="1">
    <location>
        <position position="181"/>
    </location>
    <ligand>
        <name>NADP(+)</name>
        <dbReference type="ChEBI" id="CHEBI:58349"/>
    </ligand>
</feature>
<feature type="binding site" evidence="1">
    <location>
        <position position="222"/>
    </location>
    <ligand>
        <name>NADP(+)</name>
        <dbReference type="ChEBI" id="CHEBI:58349"/>
    </ligand>
</feature>
<protein>
    <recommendedName>
        <fullName evidence="1">Bifunctional protein FolD</fullName>
    </recommendedName>
    <domain>
        <recommendedName>
            <fullName evidence="1">Methylenetetrahydrofolate dehydrogenase</fullName>
            <ecNumber evidence="1">1.5.1.5</ecNumber>
        </recommendedName>
    </domain>
    <domain>
        <recommendedName>
            <fullName evidence="1">Methenyltetrahydrofolate cyclohydrolase</fullName>
            <ecNumber evidence="1">3.5.4.9</ecNumber>
        </recommendedName>
    </domain>
</protein>
<name>FOLD_THEP1</name>
<reference key="1">
    <citation type="submission" date="2007-05" db="EMBL/GenBank/DDBJ databases">
        <title>Complete sequence of Thermotoga petrophila RKU-1.</title>
        <authorList>
            <consortium name="US DOE Joint Genome Institute"/>
            <person name="Copeland A."/>
            <person name="Lucas S."/>
            <person name="Lapidus A."/>
            <person name="Barry K."/>
            <person name="Glavina del Rio T."/>
            <person name="Dalin E."/>
            <person name="Tice H."/>
            <person name="Pitluck S."/>
            <person name="Sims D."/>
            <person name="Brettin T."/>
            <person name="Bruce D."/>
            <person name="Detter J.C."/>
            <person name="Han C."/>
            <person name="Tapia R."/>
            <person name="Schmutz J."/>
            <person name="Larimer F."/>
            <person name="Land M."/>
            <person name="Hauser L."/>
            <person name="Kyrpides N."/>
            <person name="Mikhailova N."/>
            <person name="Nelson K."/>
            <person name="Gogarten J.P."/>
            <person name="Noll K."/>
            <person name="Richardson P."/>
        </authorList>
    </citation>
    <scope>NUCLEOTIDE SEQUENCE [LARGE SCALE GENOMIC DNA]</scope>
    <source>
        <strain>ATCC BAA-488 / DSM 13995 / JCM 10881 / RKU-1</strain>
    </source>
</reference>
<organism>
    <name type="scientific">Thermotoga petrophila (strain ATCC BAA-488 / DSM 13995 / JCM 10881 / RKU-1)</name>
    <dbReference type="NCBI Taxonomy" id="390874"/>
    <lineage>
        <taxon>Bacteria</taxon>
        <taxon>Thermotogati</taxon>
        <taxon>Thermotogota</taxon>
        <taxon>Thermotogae</taxon>
        <taxon>Thermotogales</taxon>
        <taxon>Thermotogaceae</taxon>
        <taxon>Thermotoga</taxon>
    </lineage>
</organism>
<proteinExistence type="inferred from homology"/>
<accession>A5ILJ9</accession>
<keyword id="KW-0028">Amino-acid biosynthesis</keyword>
<keyword id="KW-0368">Histidine biosynthesis</keyword>
<keyword id="KW-0378">Hydrolase</keyword>
<keyword id="KW-0486">Methionine biosynthesis</keyword>
<keyword id="KW-0511">Multifunctional enzyme</keyword>
<keyword id="KW-0521">NADP</keyword>
<keyword id="KW-0554">One-carbon metabolism</keyword>
<keyword id="KW-0560">Oxidoreductase</keyword>
<keyword id="KW-0658">Purine biosynthesis</keyword>
<dbReference type="EC" id="1.5.1.5" evidence="1"/>
<dbReference type="EC" id="3.5.4.9" evidence="1"/>
<dbReference type="EMBL" id="CP000702">
    <property type="protein sequence ID" value="ABQ47072.1"/>
    <property type="molecule type" value="Genomic_DNA"/>
</dbReference>
<dbReference type="RefSeq" id="WP_011943602.1">
    <property type="nucleotide sequence ID" value="NC_009486.1"/>
</dbReference>
<dbReference type="SMR" id="A5ILJ9"/>
<dbReference type="STRING" id="390874.Tpet_1055"/>
<dbReference type="KEGG" id="tpt:Tpet_1055"/>
<dbReference type="eggNOG" id="COG0190">
    <property type="taxonomic scope" value="Bacteria"/>
</dbReference>
<dbReference type="HOGENOM" id="CLU_034045_2_1_0"/>
<dbReference type="UniPathway" id="UPA00193"/>
<dbReference type="Proteomes" id="UP000006558">
    <property type="component" value="Chromosome"/>
</dbReference>
<dbReference type="GO" id="GO:0005829">
    <property type="term" value="C:cytosol"/>
    <property type="evidence" value="ECO:0007669"/>
    <property type="project" value="TreeGrafter"/>
</dbReference>
<dbReference type="GO" id="GO:0004477">
    <property type="term" value="F:methenyltetrahydrofolate cyclohydrolase activity"/>
    <property type="evidence" value="ECO:0007669"/>
    <property type="project" value="UniProtKB-UniRule"/>
</dbReference>
<dbReference type="GO" id="GO:0004488">
    <property type="term" value="F:methylenetetrahydrofolate dehydrogenase (NADP+) activity"/>
    <property type="evidence" value="ECO:0007669"/>
    <property type="project" value="UniProtKB-UniRule"/>
</dbReference>
<dbReference type="GO" id="GO:0000105">
    <property type="term" value="P:L-histidine biosynthetic process"/>
    <property type="evidence" value="ECO:0007669"/>
    <property type="project" value="UniProtKB-KW"/>
</dbReference>
<dbReference type="GO" id="GO:0009086">
    <property type="term" value="P:methionine biosynthetic process"/>
    <property type="evidence" value="ECO:0007669"/>
    <property type="project" value="UniProtKB-KW"/>
</dbReference>
<dbReference type="GO" id="GO:0006164">
    <property type="term" value="P:purine nucleotide biosynthetic process"/>
    <property type="evidence" value="ECO:0007669"/>
    <property type="project" value="UniProtKB-KW"/>
</dbReference>
<dbReference type="GO" id="GO:0035999">
    <property type="term" value="P:tetrahydrofolate interconversion"/>
    <property type="evidence" value="ECO:0007669"/>
    <property type="project" value="UniProtKB-UniRule"/>
</dbReference>
<dbReference type="CDD" id="cd01080">
    <property type="entry name" value="NAD_bind_m-THF_DH_Cyclohyd"/>
    <property type="match status" value="1"/>
</dbReference>
<dbReference type="Gene3D" id="3.40.50.10860">
    <property type="entry name" value="Leucine Dehydrogenase, chain A, domain 1"/>
    <property type="match status" value="1"/>
</dbReference>
<dbReference type="Gene3D" id="3.40.50.720">
    <property type="entry name" value="NAD(P)-binding Rossmann-like Domain"/>
    <property type="match status" value="1"/>
</dbReference>
<dbReference type="HAMAP" id="MF_01576">
    <property type="entry name" value="THF_DHG_CYH"/>
    <property type="match status" value="1"/>
</dbReference>
<dbReference type="InterPro" id="IPR046346">
    <property type="entry name" value="Aminoacid_DH-like_N_sf"/>
</dbReference>
<dbReference type="InterPro" id="IPR036291">
    <property type="entry name" value="NAD(P)-bd_dom_sf"/>
</dbReference>
<dbReference type="InterPro" id="IPR000672">
    <property type="entry name" value="THF_DH/CycHdrlase"/>
</dbReference>
<dbReference type="InterPro" id="IPR020630">
    <property type="entry name" value="THF_DH/CycHdrlase_cat_dom"/>
</dbReference>
<dbReference type="InterPro" id="IPR020631">
    <property type="entry name" value="THF_DH/CycHdrlase_NAD-bd_dom"/>
</dbReference>
<dbReference type="PANTHER" id="PTHR48099:SF5">
    <property type="entry name" value="C-1-TETRAHYDROFOLATE SYNTHASE, CYTOPLASMIC"/>
    <property type="match status" value="1"/>
</dbReference>
<dbReference type="PANTHER" id="PTHR48099">
    <property type="entry name" value="C-1-TETRAHYDROFOLATE SYNTHASE, CYTOPLASMIC-RELATED"/>
    <property type="match status" value="1"/>
</dbReference>
<dbReference type="Pfam" id="PF00763">
    <property type="entry name" value="THF_DHG_CYH"/>
    <property type="match status" value="1"/>
</dbReference>
<dbReference type="Pfam" id="PF02882">
    <property type="entry name" value="THF_DHG_CYH_C"/>
    <property type="match status" value="1"/>
</dbReference>
<dbReference type="PRINTS" id="PR00085">
    <property type="entry name" value="THFDHDRGNASE"/>
</dbReference>
<dbReference type="SUPFAM" id="SSF53223">
    <property type="entry name" value="Aminoacid dehydrogenase-like, N-terminal domain"/>
    <property type="match status" value="1"/>
</dbReference>
<dbReference type="SUPFAM" id="SSF51735">
    <property type="entry name" value="NAD(P)-binding Rossmann-fold domains"/>
    <property type="match status" value="1"/>
</dbReference>